<reference key="1">
    <citation type="journal article" date="1998" name="Biochemistry">
        <title>DNaseY: a rat DNaseI-like gene coding for a constitutively expressed chromatin-bound endonuclease.</title>
        <authorList>
            <person name="Liu Q.Y."/>
            <person name="Pandey S."/>
            <person name="Singh R.K."/>
            <person name="Lin W."/>
            <person name="Ribecco M."/>
            <person name="Borowy-Borowski H."/>
            <person name="Smith B."/>
            <person name="Leblanc J."/>
            <person name="Walker P.R."/>
            <person name="Sikorska M."/>
        </authorList>
    </citation>
    <scope>NUCLEOTIDE SEQUENCE [MRNA]</scope>
    <scope>CHARACTERIZATION</scope>
    <source>
        <strain>Sprague-Dawley</strain>
        <tissue>Liver</tissue>
    </source>
</reference>
<reference key="2">
    <citation type="journal article" date="1998" name="Biochem. J.">
        <title>Molecular cloning and expression of a cDNA encoding an apoptotic endonuclease DNase gamma.</title>
        <authorList>
            <person name="Shiokawa D."/>
            <person name="Tanuma S."/>
        </authorList>
    </citation>
    <scope>NUCLEOTIDE SEQUENCE [MRNA]</scope>
    <source>
        <strain>Sprague-Dawley</strain>
        <tissue>Spleen</tissue>
    </source>
</reference>
<reference key="3">
    <citation type="journal article" date="2004" name="Genome Res.">
        <title>The status, quality, and expansion of the NIH full-length cDNA project: the Mammalian Gene Collection (MGC).</title>
        <authorList>
            <consortium name="The MGC Project Team"/>
        </authorList>
    </citation>
    <scope>NUCLEOTIDE SEQUENCE [LARGE SCALE MRNA]</scope>
    <source>
        <tissue>Liver</tissue>
    </source>
</reference>
<reference key="4">
    <citation type="journal article" date="1997" name="Arch. Biochem. Biophys.">
        <title>Purification, characterization, and amino acid sequencing of DNase gamma from rat spleen.</title>
        <authorList>
            <person name="Shiokawa D."/>
            <person name="Iwamatsu A."/>
            <person name="Tanuma S."/>
        </authorList>
    </citation>
    <scope>PARTIAL PROTEIN SEQUENCE</scope>
    <scope>CHARACTERIZATION</scope>
    <source>
        <tissue>Spleen</tissue>
    </source>
</reference>
<reference key="5">
    <citation type="journal article" date="1997" name="Biochem. J.">
        <title>Purification and properties of DNase gamma from apoptotic rat thymocytes.</title>
        <authorList>
            <person name="Shiokawa D."/>
            <person name="Ohyama H."/>
            <person name="Yamada T."/>
            <person name="Tanuma S."/>
        </authorList>
    </citation>
    <scope>PARTIAL PROTEIN SEQUENCE</scope>
    <scope>CHARACTERIZATION</scope>
</reference>
<reference key="6">
    <citation type="journal article" date="1994" name="Eur. J. Biochem.">
        <title>Identification of an endonuclease responsible for apoptosis in rat thymocytes.</title>
        <authorList>
            <person name="Shiokawa D."/>
            <person name="Ohyama H."/>
            <person name="Yamada T."/>
            <person name="Takahashi K."/>
            <person name="Tanuma S."/>
        </authorList>
    </citation>
    <scope>FUNCTION</scope>
    <source>
        <strain>Sprague-Dawley</strain>
        <tissue>Spleen</tissue>
    </source>
</reference>
<reference key="7">
    <citation type="journal article" date="2004" name="Cell Death Differ.">
        <title>Differential DNases are selectively used in neuronal apoptosis depending on the differentiation state.</title>
        <authorList>
            <person name="Shiokawa D."/>
            <person name="Tanuma S."/>
        </authorList>
    </citation>
    <scope>FUNCTION</scope>
</reference>
<organism>
    <name type="scientific">Rattus norvegicus</name>
    <name type="common">Rat</name>
    <dbReference type="NCBI Taxonomy" id="10116"/>
    <lineage>
        <taxon>Eukaryota</taxon>
        <taxon>Metazoa</taxon>
        <taxon>Chordata</taxon>
        <taxon>Craniata</taxon>
        <taxon>Vertebrata</taxon>
        <taxon>Euteleostomi</taxon>
        <taxon>Mammalia</taxon>
        <taxon>Eutheria</taxon>
        <taxon>Euarchontoglires</taxon>
        <taxon>Glires</taxon>
        <taxon>Rodentia</taxon>
        <taxon>Myomorpha</taxon>
        <taxon>Muroidea</taxon>
        <taxon>Muridae</taxon>
        <taxon>Murinae</taxon>
        <taxon>Rattus</taxon>
    </lineage>
</organism>
<proteinExistence type="evidence at protein level"/>
<gene>
    <name type="primary">Dnase1l3</name>
</gene>
<keyword id="KW-0013">ADP-ribosylation</keyword>
<keyword id="KW-0053">Apoptosis</keyword>
<keyword id="KW-0106">Calcium</keyword>
<keyword id="KW-0903">Direct protein sequencing</keyword>
<keyword id="KW-1015">Disulfide bond</keyword>
<keyword id="KW-0255">Endonuclease</keyword>
<keyword id="KW-0378">Hydrolase</keyword>
<keyword id="KW-0540">Nuclease</keyword>
<keyword id="KW-0539">Nucleus</keyword>
<keyword id="KW-1185">Reference proteome</keyword>
<keyword id="KW-0964">Secreted</keyword>
<keyword id="KW-0732">Signal</keyword>
<dbReference type="EC" id="3.1.21.-"/>
<dbReference type="EMBL" id="AF039852">
    <property type="protein sequence ID" value="AAC28937.1"/>
    <property type="molecule type" value="mRNA"/>
</dbReference>
<dbReference type="EMBL" id="U75689">
    <property type="protein sequence ID" value="AAC40134.1"/>
    <property type="molecule type" value="mRNA"/>
</dbReference>
<dbReference type="EMBL" id="BC088122">
    <property type="protein sequence ID" value="AAH88122.1"/>
    <property type="molecule type" value="mRNA"/>
</dbReference>
<dbReference type="RefSeq" id="NP_446359.1">
    <property type="nucleotide sequence ID" value="NM_053907.1"/>
</dbReference>
<dbReference type="RefSeq" id="XP_063129983.1">
    <property type="nucleotide sequence ID" value="XM_063273913.1"/>
</dbReference>
<dbReference type="SMR" id="O89107"/>
<dbReference type="FunCoup" id="O89107">
    <property type="interactions" value="63"/>
</dbReference>
<dbReference type="STRING" id="10116.ENSRNOP00000012532"/>
<dbReference type="PhosphoSitePlus" id="O89107"/>
<dbReference type="PaxDb" id="10116-ENSRNOP00000012532"/>
<dbReference type="Ensembl" id="ENSRNOT00000012532.5">
    <property type="protein sequence ID" value="ENSRNOP00000012532.2"/>
    <property type="gene ID" value="ENSRNOG00000009291.5"/>
</dbReference>
<dbReference type="GeneID" id="116687"/>
<dbReference type="KEGG" id="rno:116687"/>
<dbReference type="AGR" id="RGD:620669"/>
<dbReference type="CTD" id="1776"/>
<dbReference type="RGD" id="620669">
    <property type="gene designation" value="Dnase1l3"/>
</dbReference>
<dbReference type="eggNOG" id="ENOG502QPNY">
    <property type="taxonomic scope" value="Eukaryota"/>
</dbReference>
<dbReference type="GeneTree" id="ENSGT00950000182846"/>
<dbReference type="HOGENOM" id="CLU_043335_0_1_1"/>
<dbReference type="InParanoid" id="O89107"/>
<dbReference type="OMA" id="NHTDFVW"/>
<dbReference type="OrthoDB" id="10061407at2759"/>
<dbReference type="PhylomeDB" id="O89107"/>
<dbReference type="TreeFam" id="TF329541"/>
<dbReference type="PRO" id="PR:O89107"/>
<dbReference type="Proteomes" id="UP000002494">
    <property type="component" value="Chromosome 15"/>
</dbReference>
<dbReference type="Bgee" id="ENSRNOG00000009291">
    <property type="expression patterns" value="Expressed in spleen and 17 other cell types or tissues"/>
</dbReference>
<dbReference type="GO" id="GO:0005783">
    <property type="term" value="C:endoplasmic reticulum"/>
    <property type="evidence" value="ECO:0000266"/>
    <property type="project" value="RGD"/>
</dbReference>
<dbReference type="GO" id="GO:0005576">
    <property type="term" value="C:extracellular region"/>
    <property type="evidence" value="ECO:0007669"/>
    <property type="project" value="UniProtKB-SubCell"/>
</dbReference>
<dbReference type="GO" id="GO:0005634">
    <property type="term" value="C:nucleus"/>
    <property type="evidence" value="ECO:0000266"/>
    <property type="project" value="RGD"/>
</dbReference>
<dbReference type="GO" id="GO:0004530">
    <property type="term" value="F:deoxyribonuclease I activity"/>
    <property type="evidence" value="ECO:0000318"/>
    <property type="project" value="GO_Central"/>
</dbReference>
<dbReference type="GO" id="GO:0003677">
    <property type="term" value="F:DNA binding"/>
    <property type="evidence" value="ECO:0000314"/>
    <property type="project" value="RGD"/>
</dbReference>
<dbReference type="GO" id="GO:0004520">
    <property type="term" value="F:DNA endonuclease activity"/>
    <property type="evidence" value="ECO:0000314"/>
    <property type="project" value="RGD"/>
</dbReference>
<dbReference type="GO" id="GO:0004519">
    <property type="term" value="F:endonuclease activity"/>
    <property type="evidence" value="ECO:0000266"/>
    <property type="project" value="RGD"/>
</dbReference>
<dbReference type="GO" id="GO:0006309">
    <property type="term" value="P:apoptotic DNA fragmentation"/>
    <property type="evidence" value="ECO:0000266"/>
    <property type="project" value="RGD"/>
</dbReference>
<dbReference type="GO" id="GO:0006308">
    <property type="term" value="P:DNA catabolic process"/>
    <property type="evidence" value="ECO:0000250"/>
    <property type="project" value="UniProtKB"/>
</dbReference>
<dbReference type="GO" id="GO:0002283">
    <property type="term" value="P:neutrophil activation involved in immune response"/>
    <property type="evidence" value="ECO:0000250"/>
    <property type="project" value="UniProtKB"/>
</dbReference>
<dbReference type="GO" id="GO:0010623">
    <property type="term" value="P:programmed cell death involved in cell development"/>
    <property type="evidence" value="ECO:0000266"/>
    <property type="project" value="RGD"/>
</dbReference>
<dbReference type="GO" id="GO:0002673">
    <property type="term" value="P:regulation of acute inflammatory response"/>
    <property type="evidence" value="ECO:0000250"/>
    <property type="project" value="UniProtKB"/>
</dbReference>
<dbReference type="GO" id="GO:0070948">
    <property type="term" value="P:regulation of neutrophil mediated cytotoxicity"/>
    <property type="evidence" value="ECO:0000250"/>
    <property type="project" value="UniProtKB"/>
</dbReference>
<dbReference type="CDD" id="cd10282">
    <property type="entry name" value="DNase1"/>
    <property type="match status" value="1"/>
</dbReference>
<dbReference type="FunFam" id="3.60.10.10:FF:000007">
    <property type="entry name" value="Deoxyribonuclease"/>
    <property type="match status" value="1"/>
</dbReference>
<dbReference type="Gene3D" id="3.60.10.10">
    <property type="entry name" value="Endonuclease/exonuclease/phosphatase"/>
    <property type="match status" value="1"/>
</dbReference>
<dbReference type="InterPro" id="IPR018057">
    <property type="entry name" value="Deoxyribonuclease-1_AS"/>
</dbReference>
<dbReference type="InterPro" id="IPR016202">
    <property type="entry name" value="DNase_I"/>
</dbReference>
<dbReference type="InterPro" id="IPR033125">
    <property type="entry name" value="DNASE_I_2"/>
</dbReference>
<dbReference type="InterPro" id="IPR036691">
    <property type="entry name" value="Endo/exonu/phosph_ase_sf"/>
</dbReference>
<dbReference type="InterPro" id="IPR005135">
    <property type="entry name" value="Endo/exonuclease/phosphatase"/>
</dbReference>
<dbReference type="PANTHER" id="PTHR11371">
    <property type="entry name" value="DEOXYRIBONUCLEASE"/>
    <property type="match status" value="1"/>
</dbReference>
<dbReference type="PANTHER" id="PTHR11371:SF32">
    <property type="entry name" value="DEOXYRIBONUCLEASE GAMMA"/>
    <property type="match status" value="1"/>
</dbReference>
<dbReference type="Pfam" id="PF03372">
    <property type="entry name" value="Exo_endo_phos"/>
    <property type="match status" value="1"/>
</dbReference>
<dbReference type="PIRSF" id="PIRSF000988">
    <property type="entry name" value="DNase_I_euk"/>
    <property type="match status" value="1"/>
</dbReference>
<dbReference type="PRINTS" id="PR00130">
    <property type="entry name" value="DNASEI"/>
</dbReference>
<dbReference type="SMART" id="SM00476">
    <property type="entry name" value="DNaseIc"/>
    <property type="match status" value="1"/>
</dbReference>
<dbReference type="SUPFAM" id="SSF56219">
    <property type="entry name" value="DNase I-like"/>
    <property type="match status" value="1"/>
</dbReference>
<dbReference type="PROSITE" id="PS00919">
    <property type="entry name" value="DNASE_I_1"/>
    <property type="match status" value="1"/>
</dbReference>
<dbReference type="PROSITE" id="PS00918">
    <property type="entry name" value="DNASE_I_2"/>
    <property type="match status" value="1"/>
</dbReference>
<accession>O89107</accession>
<sequence>MSLYPASPYLASLLLFILALHGALSLRLCSFNVRSFGESKKENHNAMDIIVKIIKRCDLILLMEIKDSNNNICPMLMEKLNGNSRRSTTYNYVISSRLGRNTYKEQYAFLYKEKLVSVKAKYLYHDYQDGDTDVFSREPFVVWFQAPFTAAKDFVIVPLHTTPETSVKEIDELADVYTDVRRRWKAENFIFMGDFNAGCSYVPKKAWKNIRLRTDPNFVWLIGDQEDTTVKKSTSCAYDRIVLRGQEIVNSVVPRSSGVFDFQKAYELSEEEALDVSDHFPVEFKLQSSRAFTNSRKSVSLKKKKKGSRS</sequence>
<protein>
    <recommendedName>
        <fullName>Deoxyribonuclease gamma</fullName>
        <shortName>DNase gamma</shortName>
        <ecNumber>3.1.21.-</ecNumber>
    </recommendedName>
    <alternativeName>
        <fullName>DNaseY</fullName>
    </alternativeName>
    <alternativeName>
        <fullName>Deoxyribonuclease I-like 3</fullName>
        <shortName>DNase I-like 3</shortName>
    </alternativeName>
</protein>
<comment type="function">
    <text evidence="1 3 5">Has DNA hydrolytic activity. Is capable of both single- and double-stranded DNA cleavage, producing DNA fragments with 3'-OH ends (PubMed:7957253). Can cleave chromatin to nucleosomal units and cleaves nucleosomal and liposome-coated DNA. Acts in internucleosomal DNA fragmentation (INDF) during apoptosis and necrosis. The role in apoptosis includes myogenic and neuronal differentiation, and BCR-mediated clonal deletion of self-reactive B cells. Is active on chromatin in apoptotic cell-derived membrane-coated microparticles and thus suppresses anti-DNA autoimmunity (By similarity). Together with DNASE1, plays a key role in degrading neutrophil extracellular traps (NETs) (By similarity). NETs are mainly composed of DNA fibers and are released by neutrophils to bind pathogens during inflammation (By similarity). Degradation of intravascular NETs by DNASE1 and DNASE1L3 is required to prevent formation of clots that obstruct blood vessels and cause organ damage following inflammation (By similarity).</text>
</comment>
<comment type="cofactor">
    <cofactor evidence="6">
        <name>Ca(2+)</name>
        <dbReference type="ChEBI" id="CHEBI:29108"/>
    </cofactor>
</comment>
<comment type="cofactor">
    <cofactor evidence="6">
        <name>Mg(2+)</name>
        <dbReference type="ChEBI" id="CHEBI:18420"/>
    </cofactor>
</comment>
<comment type="activity regulation">
    <text evidence="6">Inhibited by zinc.</text>
</comment>
<comment type="biophysicochemical properties">
    <phDependence>
        <text evidence="6">Optimum pH is 7.2. Active from pH 6.0 to 9.0.</text>
    </phDependence>
</comment>
<comment type="subunit">
    <text>Monomer.</text>
</comment>
<comment type="subcellular location">
    <subcellularLocation>
        <location evidence="6">Nucleus</location>
    </subcellularLocation>
    <subcellularLocation>
        <location evidence="1 3">Secreted</location>
    </subcellularLocation>
    <text evidence="1 7">May first pass through the ER membrane before being imported in the nucleus. Contradictory reports exist about the subcellular localization under normal physiological conditions. Under conditions of cell death, may diffuse and/or be actively transported to the nucleus (By similarity).</text>
</comment>
<comment type="tissue specificity">
    <text>Detected at high levels in spleen, lymph nodes, thymus and liver. Observed also in kidney and testis, but not in brain or heart.</text>
</comment>
<comment type="PTM">
    <text>Seems to be synthesized as an inactive precursor protein and converted into an active mature enzyme by removal of the N-terminal precursor peptide during apoptosis.</text>
</comment>
<comment type="PTM">
    <text evidence="3">Poly-ADP-ribosylated by PARP1. ADP-ribosylation negatively regulates enzymatic activity during apoptosis.</text>
</comment>
<comment type="similarity">
    <text evidence="7">Belongs to the DNase I family.</text>
</comment>
<evidence type="ECO:0000250" key="1">
    <source>
        <dbReference type="UniProtKB" id="O55070"/>
    </source>
</evidence>
<evidence type="ECO:0000250" key="2">
    <source>
        <dbReference type="UniProtKB" id="P00639"/>
    </source>
</evidence>
<evidence type="ECO:0000250" key="3">
    <source>
        <dbReference type="UniProtKB" id="Q13609"/>
    </source>
</evidence>
<evidence type="ECO:0000255" key="4"/>
<evidence type="ECO:0000269" key="5">
    <source>
    </source>
</evidence>
<evidence type="ECO:0000269" key="6">
    <source>
    </source>
</evidence>
<evidence type="ECO:0000305" key="7"/>
<name>DNSL3_RAT</name>
<feature type="signal peptide">
    <location>
        <begin position="1"/>
        <end position="25"/>
    </location>
</feature>
<feature type="chain" id="PRO_0000007290" description="Deoxyribonuclease gamma">
    <location>
        <begin position="26"/>
        <end position="310"/>
    </location>
</feature>
<feature type="region of interest" description="Not required for free DNA-nuclease activity but required for activity towards liposome-coated DNA" evidence="1">
    <location>
        <begin position="289"/>
        <end position="310"/>
    </location>
</feature>
<feature type="short sequence motif" description="Bipartite nuclear localization signal" evidence="4">
    <location>
        <begin position="40"/>
        <end position="56"/>
    </location>
</feature>
<feature type="short sequence motif" description="Nuclear localization signal" evidence="4">
    <location>
        <begin position="301"/>
        <end position="307"/>
    </location>
</feature>
<feature type="active site" evidence="2">
    <location>
        <position position="105"/>
    </location>
</feature>
<feature type="active site" evidence="2">
    <location>
        <position position="160"/>
    </location>
</feature>
<feature type="disulfide bond" description="Essential for enzymatic activity" evidence="1">
    <location>
        <begin position="199"/>
        <end position="236"/>
    </location>
</feature>